<gene>
    <name evidence="1" type="primary">fluC1</name>
    <name evidence="1" type="synonym">crcB1</name>
    <name type="ordered locus">PPA0770</name>
</gene>
<dbReference type="EMBL" id="AE017283">
    <property type="protein sequence ID" value="AAT82526.1"/>
    <property type="molecule type" value="Genomic_DNA"/>
</dbReference>
<dbReference type="SMR" id="Q6A9P0"/>
<dbReference type="EnsemblBacteria" id="AAT82526">
    <property type="protein sequence ID" value="AAT82526"/>
    <property type="gene ID" value="PPA0770"/>
</dbReference>
<dbReference type="KEGG" id="pac:PPA0770"/>
<dbReference type="eggNOG" id="COG0239">
    <property type="taxonomic scope" value="Bacteria"/>
</dbReference>
<dbReference type="HOGENOM" id="CLU_114342_1_1_11"/>
<dbReference type="Proteomes" id="UP000000603">
    <property type="component" value="Chromosome"/>
</dbReference>
<dbReference type="GO" id="GO:0005886">
    <property type="term" value="C:plasma membrane"/>
    <property type="evidence" value="ECO:0007669"/>
    <property type="project" value="UniProtKB-SubCell"/>
</dbReference>
<dbReference type="GO" id="GO:0062054">
    <property type="term" value="F:fluoride channel activity"/>
    <property type="evidence" value="ECO:0007669"/>
    <property type="project" value="UniProtKB-UniRule"/>
</dbReference>
<dbReference type="GO" id="GO:0046872">
    <property type="term" value="F:metal ion binding"/>
    <property type="evidence" value="ECO:0007669"/>
    <property type="project" value="UniProtKB-KW"/>
</dbReference>
<dbReference type="GO" id="GO:0140114">
    <property type="term" value="P:cellular detoxification of fluoride"/>
    <property type="evidence" value="ECO:0007669"/>
    <property type="project" value="UniProtKB-UniRule"/>
</dbReference>
<dbReference type="HAMAP" id="MF_00454">
    <property type="entry name" value="FluC"/>
    <property type="match status" value="1"/>
</dbReference>
<dbReference type="InterPro" id="IPR003691">
    <property type="entry name" value="FluC"/>
</dbReference>
<dbReference type="PANTHER" id="PTHR28259">
    <property type="entry name" value="FLUORIDE EXPORT PROTEIN 1-RELATED"/>
    <property type="match status" value="1"/>
</dbReference>
<dbReference type="PANTHER" id="PTHR28259:SF1">
    <property type="entry name" value="FLUORIDE EXPORT PROTEIN 1-RELATED"/>
    <property type="match status" value="1"/>
</dbReference>
<dbReference type="Pfam" id="PF02537">
    <property type="entry name" value="CRCB"/>
    <property type="match status" value="1"/>
</dbReference>
<accession>Q6A9P0</accession>
<name>FLUC1_CUTAK</name>
<comment type="function">
    <text evidence="1">Fluoride-specific ion channel. Important for reducing fluoride concentration in the cell, thus reducing its toxicity.</text>
</comment>
<comment type="catalytic activity">
    <reaction evidence="1">
        <text>fluoride(in) = fluoride(out)</text>
        <dbReference type="Rhea" id="RHEA:76159"/>
        <dbReference type="ChEBI" id="CHEBI:17051"/>
    </reaction>
    <physiologicalReaction direction="left-to-right" evidence="1">
        <dbReference type="Rhea" id="RHEA:76160"/>
    </physiologicalReaction>
</comment>
<comment type="activity regulation">
    <text evidence="1">Na(+) is not transported, but it plays an essential structural role and its presence is essential for fluoride channel function.</text>
</comment>
<comment type="subcellular location">
    <subcellularLocation>
        <location evidence="1">Cell membrane</location>
        <topology evidence="1">Multi-pass membrane protein</topology>
    </subcellularLocation>
</comment>
<comment type="similarity">
    <text evidence="1">Belongs to the fluoride channel Fluc/FEX (TC 1.A.43) family.</text>
</comment>
<evidence type="ECO:0000255" key="1">
    <source>
        <dbReference type="HAMAP-Rule" id="MF_00454"/>
    </source>
</evidence>
<proteinExistence type="inferred from homology"/>
<feature type="chain" id="PRO_0000110149" description="Fluoride-specific ion channel FluC 1">
    <location>
        <begin position="1"/>
        <end position="143"/>
    </location>
</feature>
<feature type="transmembrane region" description="Helical" evidence="1">
    <location>
        <begin position="13"/>
        <end position="33"/>
    </location>
</feature>
<feature type="transmembrane region" description="Helical" evidence="1">
    <location>
        <begin position="42"/>
        <end position="62"/>
    </location>
</feature>
<feature type="transmembrane region" description="Helical" evidence="1">
    <location>
        <begin position="80"/>
        <end position="100"/>
    </location>
</feature>
<feature type="transmembrane region" description="Helical" evidence="1">
    <location>
        <begin position="111"/>
        <end position="131"/>
    </location>
</feature>
<feature type="binding site" evidence="1">
    <location>
        <position position="88"/>
    </location>
    <ligand>
        <name>Na(+)</name>
        <dbReference type="ChEBI" id="CHEBI:29101"/>
        <note>structural</note>
    </ligand>
</feature>
<feature type="binding site" evidence="1">
    <location>
        <position position="91"/>
    </location>
    <ligand>
        <name>Na(+)</name>
        <dbReference type="ChEBI" id="CHEBI:29101"/>
        <note>structural</note>
    </ligand>
</feature>
<sequence>MAMRSGFLDRRPVLVGLVFLGGCLGTLIRSVIAHAWPSRADGVPWGTLAINLVGAFVLATLLELLVHAGPDRGVRRAVRLCIGTGLLGGFTTYSALTVEAGQRVMSGQWLWGIAYLLTSVAAGALLAWVVIAAVRCVMGKRSS</sequence>
<protein>
    <recommendedName>
        <fullName evidence="1">Fluoride-specific ion channel FluC 1</fullName>
    </recommendedName>
</protein>
<organism>
    <name type="scientific">Cutibacterium acnes (strain DSM 16379 / KPA171202)</name>
    <name type="common">Propionibacterium acnes</name>
    <dbReference type="NCBI Taxonomy" id="267747"/>
    <lineage>
        <taxon>Bacteria</taxon>
        <taxon>Bacillati</taxon>
        <taxon>Actinomycetota</taxon>
        <taxon>Actinomycetes</taxon>
        <taxon>Propionibacteriales</taxon>
        <taxon>Propionibacteriaceae</taxon>
        <taxon>Cutibacterium</taxon>
    </lineage>
</organism>
<keyword id="KW-1003">Cell membrane</keyword>
<keyword id="KW-0407">Ion channel</keyword>
<keyword id="KW-0406">Ion transport</keyword>
<keyword id="KW-0472">Membrane</keyword>
<keyword id="KW-0479">Metal-binding</keyword>
<keyword id="KW-0915">Sodium</keyword>
<keyword id="KW-0812">Transmembrane</keyword>
<keyword id="KW-1133">Transmembrane helix</keyword>
<keyword id="KW-0813">Transport</keyword>
<reference key="1">
    <citation type="journal article" date="2004" name="Science">
        <title>The complete genome sequence of Propionibacterium acnes, a commensal of human skin.</title>
        <authorList>
            <person name="Brueggemann H."/>
            <person name="Henne A."/>
            <person name="Hoster F."/>
            <person name="Liesegang H."/>
            <person name="Wiezer A."/>
            <person name="Strittmatter A."/>
            <person name="Hujer S."/>
            <person name="Duerre P."/>
            <person name="Gottschalk G."/>
        </authorList>
    </citation>
    <scope>NUCLEOTIDE SEQUENCE [LARGE SCALE GENOMIC DNA]</scope>
    <source>
        <strain>DSM 16379 / KPA171202</strain>
    </source>
</reference>